<dbReference type="EMBL" id="AP009324">
    <property type="protein sequence ID" value="BAF78987.1"/>
    <property type="molecule type" value="Genomic_DNA"/>
</dbReference>
<dbReference type="RefSeq" id="WP_000808968.1">
    <property type="nucleotide sequence ID" value="NZ_CTYB01000015.1"/>
</dbReference>
<dbReference type="SMR" id="A7X4W8"/>
<dbReference type="KEGG" id="saw:SAHV_2104"/>
<dbReference type="HOGENOM" id="CLU_114306_2_2_9"/>
<dbReference type="GO" id="GO:1990904">
    <property type="term" value="C:ribonucleoprotein complex"/>
    <property type="evidence" value="ECO:0007669"/>
    <property type="project" value="UniProtKB-KW"/>
</dbReference>
<dbReference type="GO" id="GO:0005840">
    <property type="term" value="C:ribosome"/>
    <property type="evidence" value="ECO:0007669"/>
    <property type="project" value="UniProtKB-KW"/>
</dbReference>
<dbReference type="GO" id="GO:0003735">
    <property type="term" value="F:structural constituent of ribosome"/>
    <property type="evidence" value="ECO:0007669"/>
    <property type="project" value="InterPro"/>
</dbReference>
<dbReference type="GO" id="GO:0006412">
    <property type="term" value="P:translation"/>
    <property type="evidence" value="ECO:0007669"/>
    <property type="project" value="UniProtKB-UniRule"/>
</dbReference>
<dbReference type="Gene3D" id="4.10.830.30">
    <property type="entry name" value="Ribosomal protein L31"/>
    <property type="match status" value="1"/>
</dbReference>
<dbReference type="HAMAP" id="MF_00502">
    <property type="entry name" value="Ribosomal_bL31_2"/>
    <property type="match status" value="1"/>
</dbReference>
<dbReference type="InterPro" id="IPR034704">
    <property type="entry name" value="Ribosomal_bL28/bL31-like_sf"/>
</dbReference>
<dbReference type="InterPro" id="IPR002150">
    <property type="entry name" value="Ribosomal_bL31"/>
</dbReference>
<dbReference type="InterPro" id="IPR027493">
    <property type="entry name" value="Ribosomal_bL31_B"/>
</dbReference>
<dbReference type="InterPro" id="IPR042105">
    <property type="entry name" value="Ribosomal_bL31_sf"/>
</dbReference>
<dbReference type="NCBIfam" id="TIGR00105">
    <property type="entry name" value="L31"/>
    <property type="match status" value="1"/>
</dbReference>
<dbReference type="NCBIfam" id="NF002462">
    <property type="entry name" value="PRK01678.1"/>
    <property type="match status" value="1"/>
</dbReference>
<dbReference type="PANTHER" id="PTHR33280">
    <property type="entry name" value="50S RIBOSOMAL PROTEIN L31, CHLOROPLASTIC"/>
    <property type="match status" value="1"/>
</dbReference>
<dbReference type="PANTHER" id="PTHR33280:SF1">
    <property type="entry name" value="LARGE RIBOSOMAL SUBUNIT PROTEIN BL31C"/>
    <property type="match status" value="1"/>
</dbReference>
<dbReference type="Pfam" id="PF01197">
    <property type="entry name" value="Ribosomal_L31"/>
    <property type="match status" value="1"/>
</dbReference>
<dbReference type="PRINTS" id="PR01249">
    <property type="entry name" value="RIBOSOMALL31"/>
</dbReference>
<dbReference type="SUPFAM" id="SSF143800">
    <property type="entry name" value="L28p-like"/>
    <property type="match status" value="1"/>
</dbReference>
<dbReference type="PROSITE" id="PS01143">
    <property type="entry name" value="RIBOSOMAL_L31"/>
    <property type="match status" value="1"/>
</dbReference>
<evidence type="ECO:0000255" key="1">
    <source>
        <dbReference type="HAMAP-Rule" id="MF_00502"/>
    </source>
</evidence>
<evidence type="ECO:0000305" key="2"/>
<feature type="chain" id="PRO_1000014717" description="Large ribosomal subunit protein bL31B">
    <location>
        <begin position="1"/>
        <end position="84"/>
    </location>
</feature>
<gene>
    <name evidence="1" type="primary">rpmE2</name>
    <name type="ordered locus">SAHV_2104</name>
</gene>
<sequence>MKQGIHPEYHQVIFLDTTTNFKFLSGSTKTSSEMMEWEDGKEYPVIRLDISSDSHPFYTGRQKFAAADGRVERFNKKFGLKSNN</sequence>
<keyword id="KW-0687">Ribonucleoprotein</keyword>
<keyword id="KW-0689">Ribosomal protein</keyword>
<reference key="1">
    <citation type="journal article" date="2008" name="Antimicrob. Agents Chemother.">
        <title>Mutated response regulator graR is responsible for phenotypic conversion of Staphylococcus aureus from heterogeneous vancomycin-intermediate resistance to vancomycin-intermediate resistance.</title>
        <authorList>
            <person name="Neoh H.-M."/>
            <person name="Cui L."/>
            <person name="Yuzawa H."/>
            <person name="Takeuchi F."/>
            <person name="Matsuo M."/>
            <person name="Hiramatsu K."/>
        </authorList>
    </citation>
    <scope>NUCLEOTIDE SEQUENCE [LARGE SCALE GENOMIC DNA]</scope>
    <source>
        <strain>Mu3 / ATCC 700698</strain>
    </source>
</reference>
<accession>A7X4W8</accession>
<protein>
    <recommendedName>
        <fullName evidence="1">Large ribosomal subunit protein bL31B</fullName>
    </recommendedName>
    <alternativeName>
        <fullName evidence="2">50S ribosomal protein L31 type B</fullName>
    </alternativeName>
</protein>
<organism>
    <name type="scientific">Staphylococcus aureus (strain Mu3 / ATCC 700698)</name>
    <dbReference type="NCBI Taxonomy" id="418127"/>
    <lineage>
        <taxon>Bacteria</taxon>
        <taxon>Bacillati</taxon>
        <taxon>Bacillota</taxon>
        <taxon>Bacilli</taxon>
        <taxon>Bacillales</taxon>
        <taxon>Staphylococcaceae</taxon>
        <taxon>Staphylococcus</taxon>
    </lineage>
</organism>
<name>RL31B_STAA1</name>
<comment type="subunit">
    <text evidence="1">Part of the 50S ribosomal subunit.</text>
</comment>
<comment type="similarity">
    <text evidence="1">Belongs to the bacterial ribosomal protein bL31 family. Type B subfamily.</text>
</comment>
<proteinExistence type="inferred from homology"/>